<reference key="1">
    <citation type="journal article" date="2008" name="PLoS ONE">
        <title>Genome sequence of the saprophyte Leptospira biflexa provides insights into the evolution of Leptospira and the pathogenesis of leptospirosis.</title>
        <authorList>
            <person name="Picardeau M."/>
            <person name="Bulach D.M."/>
            <person name="Bouchier C."/>
            <person name="Zuerner R.L."/>
            <person name="Zidane N."/>
            <person name="Wilson P.J."/>
            <person name="Creno S."/>
            <person name="Kuczek E.S."/>
            <person name="Bommezzadri S."/>
            <person name="Davis J.C."/>
            <person name="McGrath A."/>
            <person name="Johnson M.J."/>
            <person name="Boursaux-Eude C."/>
            <person name="Seemann T."/>
            <person name="Rouy Z."/>
            <person name="Coppel R.L."/>
            <person name="Rood J.I."/>
            <person name="Lajus A."/>
            <person name="Davies J.K."/>
            <person name="Medigue C."/>
            <person name="Adler B."/>
        </authorList>
    </citation>
    <scope>NUCLEOTIDE SEQUENCE [LARGE SCALE GENOMIC DNA]</scope>
    <source>
        <strain>Patoc 1 / Ames</strain>
    </source>
</reference>
<comment type="similarity">
    <text evidence="1">Belongs to the bacterial ribosomal protein bL35 family.</text>
</comment>
<name>RL35_LEPBA</name>
<feature type="chain" id="PRO_1000127369" description="Large ribosomal subunit protein bL35">
    <location>
        <begin position="1"/>
        <end position="66"/>
    </location>
</feature>
<organism>
    <name type="scientific">Leptospira biflexa serovar Patoc (strain Patoc 1 / Ames)</name>
    <dbReference type="NCBI Taxonomy" id="355278"/>
    <lineage>
        <taxon>Bacteria</taxon>
        <taxon>Pseudomonadati</taxon>
        <taxon>Spirochaetota</taxon>
        <taxon>Spirochaetia</taxon>
        <taxon>Leptospirales</taxon>
        <taxon>Leptospiraceae</taxon>
        <taxon>Leptospira</taxon>
    </lineage>
</organism>
<keyword id="KW-0687">Ribonucleoprotein</keyword>
<keyword id="KW-0689">Ribosomal protein</keyword>
<protein>
    <recommendedName>
        <fullName evidence="1">Large ribosomal subunit protein bL35</fullName>
    </recommendedName>
    <alternativeName>
        <fullName evidence="2">50S ribosomal protein L35</fullName>
    </alternativeName>
</protein>
<gene>
    <name evidence="1" type="primary">rpmI</name>
    <name type="ordered locus">LBF_2330</name>
</gene>
<accession>B0SCH3</accession>
<proteinExistence type="inferred from homology"/>
<dbReference type="EMBL" id="CP000777">
    <property type="protein sequence ID" value="ABZ94820.1"/>
    <property type="molecule type" value="Genomic_DNA"/>
</dbReference>
<dbReference type="RefSeq" id="WP_002975302.1">
    <property type="nucleotide sequence ID" value="NC_010842.1"/>
</dbReference>
<dbReference type="SMR" id="B0SCH3"/>
<dbReference type="KEGG" id="lbf:LBF_2330"/>
<dbReference type="HOGENOM" id="CLU_169643_4_3_12"/>
<dbReference type="GO" id="GO:0022625">
    <property type="term" value="C:cytosolic large ribosomal subunit"/>
    <property type="evidence" value="ECO:0007669"/>
    <property type="project" value="TreeGrafter"/>
</dbReference>
<dbReference type="GO" id="GO:0003735">
    <property type="term" value="F:structural constituent of ribosome"/>
    <property type="evidence" value="ECO:0007669"/>
    <property type="project" value="InterPro"/>
</dbReference>
<dbReference type="GO" id="GO:0006412">
    <property type="term" value="P:translation"/>
    <property type="evidence" value="ECO:0007669"/>
    <property type="project" value="UniProtKB-UniRule"/>
</dbReference>
<dbReference type="FunFam" id="4.10.410.60:FF:000001">
    <property type="entry name" value="50S ribosomal protein L35"/>
    <property type="match status" value="1"/>
</dbReference>
<dbReference type="Gene3D" id="4.10.410.60">
    <property type="match status" value="1"/>
</dbReference>
<dbReference type="HAMAP" id="MF_00514">
    <property type="entry name" value="Ribosomal_bL35"/>
    <property type="match status" value="1"/>
</dbReference>
<dbReference type="InterPro" id="IPR001706">
    <property type="entry name" value="Ribosomal_bL35"/>
</dbReference>
<dbReference type="InterPro" id="IPR021137">
    <property type="entry name" value="Ribosomal_bL35-like"/>
</dbReference>
<dbReference type="InterPro" id="IPR018265">
    <property type="entry name" value="Ribosomal_bL35_CS"/>
</dbReference>
<dbReference type="InterPro" id="IPR037229">
    <property type="entry name" value="Ribosomal_bL35_sf"/>
</dbReference>
<dbReference type="NCBIfam" id="TIGR00001">
    <property type="entry name" value="rpmI_bact"/>
    <property type="match status" value="1"/>
</dbReference>
<dbReference type="PANTHER" id="PTHR33343">
    <property type="entry name" value="54S RIBOSOMAL PROTEIN BL35M"/>
    <property type="match status" value="1"/>
</dbReference>
<dbReference type="PANTHER" id="PTHR33343:SF1">
    <property type="entry name" value="LARGE RIBOSOMAL SUBUNIT PROTEIN BL35M"/>
    <property type="match status" value="1"/>
</dbReference>
<dbReference type="Pfam" id="PF01632">
    <property type="entry name" value="Ribosomal_L35p"/>
    <property type="match status" value="1"/>
</dbReference>
<dbReference type="PRINTS" id="PR00064">
    <property type="entry name" value="RIBOSOMALL35"/>
</dbReference>
<dbReference type="SUPFAM" id="SSF143034">
    <property type="entry name" value="L35p-like"/>
    <property type="match status" value="1"/>
</dbReference>
<dbReference type="PROSITE" id="PS00936">
    <property type="entry name" value="RIBOSOMAL_L35"/>
    <property type="match status" value="1"/>
</dbReference>
<evidence type="ECO:0000255" key="1">
    <source>
        <dbReference type="HAMAP-Rule" id="MF_00514"/>
    </source>
</evidence>
<evidence type="ECO:0000305" key="2"/>
<sequence>MYKLKTNRAAAKRFKFTKSGKIKRGCAFRRHILEKKSPKMKHQSRGMHVIHETDYNRVEKLLPYGG</sequence>